<gene>
    <name evidence="1" type="primary">egsA</name>
    <name type="ordered locus">Pcal_0566</name>
</gene>
<accession>A3MTM6</accession>
<keyword id="KW-0002">3D-structure</keyword>
<keyword id="KW-0963">Cytoplasm</keyword>
<keyword id="KW-0444">Lipid biosynthesis</keyword>
<keyword id="KW-0443">Lipid metabolism</keyword>
<keyword id="KW-0479">Metal-binding</keyword>
<keyword id="KW-0520">NAD</keyword>
<keyword id="KW-0521">NADP</keyword>
<keyword id="KW-0560">Oxidoreductase</keyword>
<keyword id="KW-0594">Phospholipid biosynthesis</keyword>
<keyword id="KW-1208">Phospholipid metabolism</keyword>
<keyword id="KW-0862">Zinc</keyword>
<sequence length="338" mass="36990">MKKVERFEVPRTIIFGPGALEKTPEVIPPSGRVLIITGKSSTRKYAERVAELLKQNCEIISYDQVELEKPGFDLVIGIGGGRPLDMAKVYSYIHKKPFVAIPTSASHDGIASPYVSFSLTQRFSKYGKISSSPVAIIADTSIILSAPSRLLKAGIGDLLGKIIAVRDWQLAHRLKGEEYSEYAAHLSLTSYKIAVGNAQKIKNFIREEDVRVLVKALIGCGVAMGIAGSSRPCSGSEHLFAHAIEVRVEKEDEVVHGELVALGTIIMAYLHGINWRRIKRIADIIGLPTSLRQANIDVDLALEALTTAHTLRPDRYTILGDGLSREAAKRALEDVELI</sequence>
<evidence type="ECO:0000255" key="1">
    <source>
        <dbReference type="HAMAP-Rule" id="MF_00497"/>
    </source>
</evidence>
<evidence type="ECO:0007829" key="2">
    <source>
        <dbReference type="PDB" id="5FB3"/>
    </source>
</evidence>
<dbReference type="EC" id="1.1.1.261" evidence="1"/>
<dbReference type="EMBL" id="CP000561">
    <property type="protein sequence ID" value="ABO07993.1"/>
    <property type="molecule type" value="Genomic_DNA"/>
</dbReference>
<dbReference type="RefSeq" id="WP_011849251.1">
    <property type="nucleotide sequence ID" value="NC_009073.1"/>
</dbReference>
<dbReference type="PDB" id="5FB3">
    <property type="method" value="X-ray"/>
    <property type="resolution" value="2.45 A"/>
    <property type="chains" value="A/B/C/D/E/F=1-338"/>
</dbReference>
<dbReference type="PDBsum" id="5FB3"/>
<dbReference type="SMR" id="A3MTM6"/>
<dbReference type="STRING" id="410359.Pcal_0566"/>
<dbReference type="GeneID" id="4910242"/>
<dbReference type="KEGG" id="pcl:Pcal_0566"/>
<dbReference type="eggNOG" id="arCOG00982">
    <property type="taxonomic scope" value="Archaea"/>
</dbReference>
<dbReference type="HOGENOM" id="CLU_038362_0_0_2"/>
<dbReference type="OrthoDB" id="8656at2157"/>
<dbReference type="BRENDA" id="1.1.1.261">
    <property type="organism ID" value="7282"/>
</dbReference>
<dbReference type="UniPathway" id="UPA00940"/>
<dbReference type="Proteomes" id="UP000001431">
    <property type="component" value="Chromosome"/>
</dbReference>
<dbReference type="GO" id="GO:0005737">
    <property type="term" value="C:cytoplasm"/>
    <property type="evidence" value="ECO:0007669"/>
    <property type="project" value="UniProtKB-SubCell"/>
</dbReference>
<dbReference type="GO" id="GO:0106357">
    <property type="term" value="F:glycerol-1-phosphate dehydrogenase (NAD+) activity"/>
    <property type="evidence" value="ECO:0007669"/>
    <property type="project" value="RHEA"/>
</dbReference>
<dbReference type="GO" id="GO:0106358">
    <property type="term" value="F:glycerol-1-phosphate dehydrogenase (NADP+) activity"/>
    <property type="evidence" value="ECO:0007669"/>
    <property type="project" value="RHEA"/>
</dbReference>
<dbReference type="GO" id="GO:0046872">
    <property type="term" value="F:metal ion binding"/>
    <property type="evidence" value="ECO:0007669"/>
    <property type="project" value="UniProtKB-KW"/>
</dbReference>
<dbReference type="GO" id="GO:0006650">
    <property type="term" value="P:glycerophospholipid metabolic process"/>
    <property type="evidence" value="ECO:0007669"/>
    <property type="project" value="UniProtKB-UniRule"/>
</dbReference>
<dbReference type="GO" id="GO:0008654">
    <property type="term" value="P:phospholipid biosynthetic process"/>
    <property type="evidence" value="ECO:0007669"/>
    <property type="project" value="UniProtKB-KW"/>
</dbReference>
<dbReference type="CDD" id="cd08549">
    <property type="entry name" value="G1PDH_related"/>
    <property type="match status" value="1"/>
</dbReference>
<dbReference type="Gene3D" id="3.40.50.1970">
    <property type="match status" value="1"/>
</dbReference>
<dbReference type="Gene3D" id="1.20.1090.10">
    <property type="entry name" value="Dehydroquinate synthase-like - alpha domain"/>
    <property type="match status" value="1"/>
</dbReference>
<dbReference type="HAMAP" id="MF_00497_A">
    <property type="entry name" value="G1P_dehydrogenase_A"/>
    <property type="match status" value="1"/>
</dbReference>
<dbReference type="InterPro" id="IPR023002">
    <property type="entry name" value="G1P_dehydrogenase_arc"/>
</dbReference>
<dbReference type="InterPro" id="IPR032837">
    <property type="entry name" value="G1PDH"/>
</dbReference>
<dbReference type="InterPro" id="IPR016205">
    <property type="entry name" value="Glycerol_DH"/>
</dbReference>
<dbReference type="PANTHER" id="PTHR43616">
    <property type="entry name" value="GLYCEROL DEHYDROGENASE"/>
    <property type="match status" value="1"/>
</dbReference>
<dbReference type="PANTHER" id="PTHR43616:SF5">
    <property type="entry name" value="GLYCEROL DEHYDROGENASE 1"/>
    <property type="match status" value="1"/>
</dbReference>
<dbReference type="Pfam" id="PF13685">
    <property type="entry name" value="Fe-ADH_2"/>
    <property type="match status" value="1"/>
</dbReference>
<dbReference type="PIRSF" id="PIRSF000112">
    <property type="entry name" value="Glycerol_dehydrogenase"/>
    <property type="match status" value="1"/>
</dbReference>
<dbReference type="SUPFAM" id="SSF56796">
    <property type="entry name" value="Dehydroquinate synthase-like"/>
    <property type="match status" value="1"/>
</dbReference>
<feature type="chain" id="PRO_1000050607" description="Glycerol-1-phosphate dehydrogenase [NAD(P)+]">
    <location>
        <begin position="1"/>
        <end position="338"/>
    </location>
</feature>
<feature type="binding site" evidence="1">
    <location>
        <begin position="81"/>
        <end position="85"/>
    </location>
    <ligand>
        <name>NAD(+)</name>
        <dbReference type="ChEBI" id="CHEBI:57540"/>
    </ligand>
</feature>
<feature type="binding site" evidence="1">
    <location>
        <begin position="103"/>
        <end position="106"/>
    </location>
    <ligand>
        <name>NAD(+)</name>
        <dbReference type="ChEBI" id="CHEBI:57540"/>
    </ligand>
</feature>
<feature type="binding site" evidence="1">
    <location>
        <position position="108"/>
    </location>
    <ligand>
        <name>substrate</name>
    </ligand>
</feature>
<feature type="binding site" evidence="1">
    <location>
        <position position="112"/>
    </location>
    <ligand>
        <name>NAD(+)</name>
        <dbReference type="ChEBI" id="CHEBI:57540"/>
    </ligand>
</feature>
<feature type="binding site" evidence="1">
    <location>
        <position position="157"/>
    </location>
    <ligand>
        <name>substrate</name>
    </ligand>
</feature>
<feature type="binding site" evidence="1">
    <location>
        <position position="157"/>
    </location>
    <ligand>
        <name>Zn(2+)</name>
        <dbReference type="ChEBI" id="CHEBI:29105"/>
        <note>catalytic</note>
    </ligand>
</feature>
<feature type="binding site" evidence="1">
    <location>
        <position position="238"/>
    </location>
    <ligand>
        <name>Zn(2+)</name>
        <dbReference type="ChEBI" id="CHEBI:29105"/>
        <note>catalytic</note>
    </ligand>
</feature>
<feature type="binding site" evidence="1">
    <location>
        <position position="242"/>
    </location>
    <ligand>
        <name>substrate</name>
    </ligand>
</feature>
<feature type="binding site" evidence="1">
    <location>
        <position position="256"/>
    </location>
    <ligand>
        <name>Zn(2+)</name>
        <dbReference type="ChEBI" id="CHEBI:29105"/>
        <note>catalytic</note>
    </ligand>
</feature>
<feature type="strand" evidence="2">
    <location>
        <begin position="5"/>
        <end position="8"/>
    </location>
</feature>
<feature type="strand" evidence="2">
    <location>
        <begin position="11"/>
        <end position="16"/>
    </location>
</feature>
<feature type="helix" evidence="2">
    <location>
        <begin position="19"/>
        <end position="26"/>
    </location>
</feature>
<feature type="strand" evidence="2">
    <location>
        <begin position="29"/>
        <end position="31"/>
    </location>
</feature>
<feature type="strand" evidence="2">
    <location>
        <begin position="33"/>
        <end position="37"/>
    </location>
</feature>
<feature type="helix" evidence="2">
    <location>
        <begin position="43"/>
        <end position="52"/>
    </location>
</feature>
<feature type="strand" evidence="2">
    <location>
        <begin position="57"/>
        <end position="61"/>
    </location>
</feature>
<feature type="helix" evidence="2">
    <location>
        <begin position="62"/>
        <end position="64"/>
    </location>
</feature>
<feature type="strand" evidence="2">
    <location>
        <begin position="73"/>
        <end position="80"/>
    </location>
</feature>
<feature type="helix" evidence="2">
    <location>
        <begin position="81"/>
        <end position="94"/>
    </location>
</feature>
<feature type="strand" evidence="2">
    <location>
        <begin position="98"/>
        <end position="103"/>
    </location>
</feature>
<feature type="turn" evidence="2">
    <location>
        <begin position="108"/>
        <end position="111"/>
    </location>
</feature>
<feature type="helix" evidence="2">
    <location>
        <begin position="124"/>
        <end position="126"/>
    </location>
</feature>
<feature type="strand" evidence="2">
    <location>
        <begin position="134"/>
        <end position="139"/>
    </location>
</feature>
<feature type="helix" evidence="2">
    <location>
        <begin position="140"/>
        <end position="144"/>
    </location>
</feature>
<feature type="helix" evidence="2">
    <location>
        <begin position="148"/>
        <end position="159"/>
    </location>
</feature>
<feature type="helix" evidence="2">
    <location>
        <begin position="161"/>
        <end position="175"/>
    </location>
</feature>
<feature type="helix" evidence="2">
    <location>
        <begin position="181"/>
        <end position="196"/>
    </location>
</feature>
<feature type="helix" evidence="2">
    <location>
        <begin position="198"/>
        <end position="201"/>
    </location>
</feature>
<feature type="helix" evidence="2">
    <location>
        <begin position="207"/>
        <end position="227"/>
    </location>
</feature>
<feature type="helix" evidence="2">
    <location>
        <begin position="231"/>
        <end position="233"/>
    </location>
</feature>
<feature type="helix" evidence="2">
    <location>
        <begin position="236"/>
        <end position="247"/>
    </location>
</feature>
<feature type="helix" evidence="2">
    <location>
        <begin position="251"/>
        <end position="253"/>
    </location>
</feature>
<feature type="helix" evidence="2">
    <location>
        <begin position="256"/>
        <end position="271"/>
    </location>
</feature>
<feature type="helix" evidence="2">
    <location>
        <begin position="275"/>
        <end position="285"/>
    </location>
</feature>
<feature type="turn" evidence="2">
    <location>
        <begin position="291"/>
        <end position="295"/>
    </location>
</feature>
<feature type="helix" evidence="2">
    <location>
        <begin position="298"/>
        <end position="307"/>
    </location>
</feature>
<feature type="helix" evidence="2">
    <location>
        <begin position="308"/>
        <end position="310"/>
    </location>
</feature>
<feature type="turn" evidence="2">
    <location>
        <begin position="318"/>
        <end position="321"/>
    </location>
</feature>
<feature type="helix" evidence="2">
    <location>
        <begin position="325"/>
        <end position="334"/>
    </location>
</feature>
<reference key="1">
    <citation type="submission" date="2007-02" db="EMBL/GenBank/DDBJ databases">
        <title>Complete sequence of Pyrobaculum calidifontis JCM 11548.</title>
        <authorList>
            <consortium name="US DOE Joint Genome Institute"/>
            <person name="Copeland A."/>
            <person name="Lucas S."/>
            <person name="Lapidus A."/>
            <person name="Barry K."/>
            <person name="Glavina del Rio T."/>
            <person name="Dalin E."/>
            <person name="Tice H."/>
            <person name="Pitluck S."/>
            <person name="Chain P."/>
            <person name="Malfatti S."/>
            <person name="Shin M."/>
            <person name="Vergez L."/>
            <person name="Schmutz J."/>
            <person name="Larimer F."/>
            <person name="Land M."/>
            <person name="Hauser L."/>
            <person name="Kyrpides N."/>
            <person name="Mikhailova N."/>
            <person name="Cozen A.E."/>
            <person name="Fitz-Gibbon S.T."/>
            <person name="House C.H."/>
            <person name="Saltikov C."/>
            <person name="Lowe T.M."/>
            <person name="Richardson P."/>
        </authorList>
    </citation>
    <scope>NUCLEOTIDE SEQUENCE [LARGE SCALE GENOMIC DNA]</scope>
    <source>
        <strain>DSM 21063 / JCM 11548 / VA1</strain>
    </source>
</reference>
<proteinExistence type="evidence at protein level"/>
<protein>
    <recommendedName>
        <fullName evidence="1">Glycerol-1-phosphate dehydrogenase [NAD(P)+]</fullName>
        <shortName evidence="1">G1P dehydrogenase</shortName>
        <shortName evidence="1">G1PDH</shortName>
        <ecNumber evidence="1">1.1.1.261</ecNumber>
    </recommendedName>
    <alternativeName>
        <fullName evidence="1">Enantiomeric glycerophosphate synthase</fullName>
    </alternativeName>
    <alternativeName>
        <fullName evidence="1">sn-glycerol-1-phosphate dehydrogenase</fullName>
    </alternativeName>
</protein>
<comment type="function">
    <text evidence="1">Catalyzes the NAD(P)H-dependent reduction of dihydroxyacetonephosphate (DHAP or glycerone phosphate) to glycerol 1-phosphate (G1P). The G1P thus generated is used as the glycerophosphate backbone of phospholipids in the cellular membranes of Archaea.</text>
</comment>
<comment type="catalytic activity">
    <reaction evidence="1">
        <text>sn-glycerol 1-phosphate + NAD(+) = dihydroxyacetone phosphate + NADH + H(+)</text>
        <dbReference type="Rhea" id="RHEA:21412"/>
        <dbReference type="ChEBI" id="CHEBI:15378"/>
        <dbReference type="ChEBI" id="CHEBI:57540"/>
        <dbReference type="ChEBI" id="CHEBI:57642"/>
        <dbReference type="ChEBI" id="CHEBI:57685"/>
        <dbReference type="ChEBI" id="CHEBI:57945"/>
        <dbReference type="EC" id="1.1.1.261"/>
    </reaction>
</comment>
<comment type="catalytic activity">
    <reaction evidence="1">
        <text>sn-glycerol 1-phosphate + NADP(+) = dihydroxyacetone phosphate + NADPH + H(+)</text>
        <dbReference type="Rhea" id="RHEA:21416"/>
        <dbReference type="ChEBI" id="CHEBI:15378"/>
        <dbReference type="ChEBI" id="CHEBI:57642"/>
        <dbReference type="ChEBI" id="CHEBI:57685"/>
        <dbReference type="ChEBI" id="CHEBI:57783"/>
        <dbReference type="ChEBI" id="CHEBI:58349"/>
        <dbReference type="EC" id="1.1.1.261"/>
    </reaction>
</comment>
<comment type="cofactor">
    <cofactor evidence="1">
        <name>Zn(2+)</name>
        <dbReference type="ChEBI" id="CHEBI:29105"/>
    </cofactor>
    <text evidence="1">Binds 1 zinc ion per subunit.</text>
</comment>
<comment type="pathway">
    <text evidence="1">Membrane lipid metabolism; glycerophospholipid metabolism.</text>
</comment>
<comment type="subunit">
    <text evidence="1">Homodimer.</text>
</comment>
<comment type="subcellular location">
    <subcellularLocation>
        <location evidence="1">Cytoplasm</location>
    </subcellularLocation>
</comment>
<comment type="similarity">
    <text evidence="1">Belongs to the glycerol-1-phosphate dehydrogenase family.</text>
</comment>
<name>G1PDH_PYRCJ</name>
<organism>
    <name type="scientific">Pyrobaculum calidifontis (strain DSM 21063 / JCM 11548 / VA1)</name>
    <dbReference type="NCBI Taxonomy" id="410359"/>
    <lineage>
        <taxon>Archaea</taxon>
        <taxon>Thermoproteota</taxon>
        <taxon>Thermoprotei</taxon>
        <taxon>Thermoproteales</taxon>
        <taxon>Thermoproteaceae</taxon>
        <taxon>Pyrobaculum</taxon>
    </lineage>
</organism>